<keyword id="KW-0150">Chloroplast</keyword>
<keyword id="KW-0507">mRNA processing</keyword>
<keyword id="KW-0934">Plastid</keyword>
<keyword id="KW-0694">RNA-binding</keyword>
<keyword id="KW-0819">tRNA processing</keyword>
<accession>Q85XY6</accession>
<accession>Q8HVW5</accession>
<evidence type="ECO:0000255" key="1">
    <source>
        <dbReference type="HAMAP-Rule" id="MF_01390"/>
    </source>
</evidence>
<evidence type="ECO:0000305" key="2"/>
<name>MATK_OCIBA</name>
<organism>
    <name type="scientific">Ocimum basilicum</name>
    <name type="common">Sweet basil</name>
    <dbReference type="NCBI Taxonomy" id="39350"/>
    <lineage>
        <taxon>Eukaryota</taxon>
        <taxon>Viridiplantae</taxon>
        <taxon>Streptophyta</taxon>
        <taxon>Embryophyta</taxon>
        <taxon>Tracheophyta</taxon>
        <taxon>Spermatophyta</taxon>
        <taxon>Magnoliopsida</taxon>
        <taxon>eudicotyledons</taxon>
        <taxon>Gunneridae</taxon>
        <taxon>Pentapetalae</taxon>
        <taxon>asterids</taxon>
        <taxon>lamiids</taxon>
        <taxon>Lamiales</taxon>
        <taxon>Lamiaceae</taxon>
        <taxon>Nepetoideae</taxon>
        <taxon>Ocimeae</taxon>
        <taxon>Ociminae</taxon>
        <taxon>Ocimum</taxon>
    </lineage>
</organism>
<protein>
    <recommendedName>
        <fullName evidence="1">Maturase K</fullName>
    </recommendedName>
    <alternativeName>
        <fullName evidence="1">Intron maturase</fullName>
    </alternativeName>
</protein>
<dbReference type="EMBL" id="AY177670">
    <property type="protein sequence ID" value="AAO21372.1"/>
    <property type="molecule type" value="Genomic_DNA"/>
</dbReference>
<dbReference type="EMBL" id="AF315306">
    <property type="protein sequence ID" value="AAN61185.1"/>
    <property type="molecule type" value="Genomic_DNA"/>
</dbReference>
<dbReference type="GO" id="GO:0009507">
    <property type="term" value="C:chloroplast"/>
    <property type="evidence" value="ECO:0007669"/>
    <property type="project" value="UniProtKB-SubCell"/>
</dbReference>
<dbReference type="GO" id="GO:0003723">
    <property type="term" value="F:RNA binding"/>
    <property type="evidence" value="ECO:0007669"/>
    <property type="project" value="UniProtKB-KW"/>
</dbReference>
<dbReference type="GO" id="GO:0006397">
    <property type="term" value="P:mRNA processing"/>
    <property type="evidence" value="ECO:0007669"/>
    <property type="project" value="UniProtKB-KW"/>
</dbReference>
<dbReference type="GO" id="GO:0008380">
    <property type="term" value="P:RNA splicing"/>
    <property type="evidence" value="ECO:0007669"/>
    <property type="project" value="UniProtKB-UniRule"/>
</dbReference>
<dbReference type="GO" id="GO:0008033">
    <property type="term" value="P:tRNA processing"/>
    <property type="evidence" value="ECO:0007669"/>
    <property type="project" value="UniProtKB-KW"/>
</dbReference>
<dbReference type="HAMAP" id="MF_01390">
    <property type="entry name" value="MatK"/>
    <property type="match status" value="1"/>
</dbReference>
<dbReference type="InterPro" id="IPR024937">
    <property type="entry name" value="Domain_X"/>
</dbReference>
<dbReference type="InterPro" id="IPR002866">
    <property type="entry name" value="Maturase_MatK"/>
</dbReference>
<dbReference type="InterPro" id="IPR024942">
    <property type="entry name" value="Maturase_MatK_N"/>
</dbReference>
<dbReference type="PANTHER" id="PTHR34811">
    <property type="entry name" value="MATURASE K"/>
    <property type="match status" value="1"/>
</dbReference>
<dbReference type="PANTHER" id="PTHR34811:SF1">
    <property type="entry name" value="MATURASE K"/>
    <property type="match status" value="1"/>
</dbReference>
<dbReference type="Pfam" id="PF01348">
    <property type="entry name" value="Intron_maturas2"/>
    <property type="match status" value="1"/>
</dbReference>
<dbReference type="Pfam" id="PF01824">
    <property type="entry name" value="MatK_N"/>
    <property type="match status" value="1"/>
</dbReference>
<reference key="1">
    <citation type="submission" date="2002-11" db="EMBL/GenBank/DDBJ databases">
        <title>The matK gene encoded by the Ocimum basilicum chloroplast trnK intron.</title>
        <authorList>
            <person name="Yin W.-B."/>
            <person name="Hu J."/>
            <person name="Zhang Y."/>
            <person name="Zhang F.-Y."/>
            <person name="Hu Z.-M."/>
        </authorList>
    </citation>
    <scope>NUCLEOTIDE SEQUENCE [GENOMIC DNA]</scope>
</reference>
<reference key="2">
    <citation type="submission" date="2000-10" db="EMBL/GenBank/DDBJ databases">
        <title>Phylogenetic analysis of Schnabelia based on the cpDNA gene sequences of matK.</title>
        <authorList>
            <person name="Du Y."/>
            <person name="Shi S."/>
            <person name="Huang Y."/>
            <person name="He X."/>
            <person name="Tan F."/>
            <person name="Chang H."/>
        </authorList>
    </citation>
    <scope>NUCLEOTIDE SEQUENCE [GENOMIC DNA] OF 1-442</scope>
</reference>
<proteinExistence type="inferred from homology"/>
<sequence length="506" mass="60282">MEKIQRYLQLKRSQQHDFLYPLIFQEYIYVFAHNRALNRSILSENPGYDNKSSLRIVKRLITRMYQQNHFLISSNDSNQNRFWARNKNLYSEIISEGFAFIVEIPFSLQLISCLERKKNKIIKSQNLRSIHSIFPFLEDNFSHLNFVLDILIPHSVHVEILIQTLRYWVKDVSSLHLLRVFLNQYCSLITSKKVSSSLSKRNQRFFFFLYNSHVCEYESIFVFLRNQSFHLRSTSSGVLLERIYFYIKIERLVNVFVKDFRANLWLVEEPCMHYIRYQGKSILASKGTSLFMNKWKFYLVTSWEWHFLVWFHPRRICINQFSRHSLEIFGYLSNVQTDPSVVRSQILENAFLINNAIRKLDTLVPIIPLIAKLAKEKFCNVLGHPSSKPIWADLSDSNIIDRFGRICRNISHYHSGSSKKKSLYRIKYILRLSCARTLARKHKSTVRVFLKRLGSELLEEFLMSEEDVLFLTFQKTSSALRRVYRSRIWYLDMISINDLANYKSKF</sequence>
<gene>
    <name evidence="1" type="primary">matK</name>
</gene>
<comment type="function">
    <text evidence="1">Usually encoded in the trnK tRNA gene intron. Probably assists in splicing its own and other chloroplast group II introns.</text>
</comment>
<comment type="subcellular location">
    <subcellularLocation>
        <location>Plastid</location>
        <location>Chloroplast</location>
    </subcellularLocation>
</comment>
<comment type="similarity">
    <text evidence="1">Belongs to the intron maturase 2 family. MatK subfamily.</text>
</comment>
<geneLocation type="chloroplast"/>
<feature type="chain" id="PRO_0000143555" description="Maturase K">
    <location>
        <begin position="1"/>
        <end position="506"/>
    </location>
</feature>
<feature type="sequence conflict" description="In Ref. 2; AAN61185." evidence="2" ref="2">
    <original>K</original>
    <variation>E</variation>
    <location>
        <position position="3"/>
    </location>
</feature>
<feature type="sequence conflict" description="In Ref. 2; AAN61185." evidence="2" ref="2">
    <original>K</original>
    <variation>E</variation>
    <location>
        <position position="11"/>
    </location>
</feature>
<feature type="sequence conflict" description="In Ref. 2; AAN61185." evidence="2" ref="2">
    <original>ES</original>
    <variation>QC</variation>
    <location>
        <begin position="218"/>
        <end position="219"/>
    </location>
</feature>
<feature type="sequence conflict" description="In Ref. 2; AAN61185." evidence="2" ref="2">
    <original>R</original>
    <variation>K</variation>
    <location>
        <position position="358"/>
    </location>
</feature>